<gene>
    <name type="primary">pup</name>
    <name type="ordered locus">Mmcs_3130.1</name>
</gene>
<reference key="1">
    <citation type="submission" date="2006-06" db="EMBL/GenBank/DDBJ databases">
        <title>Complete sequence of chromosome of Mycobacterium sp. MCS.</title>
        <authorList>
            <consortium name="US DOE Joint Genome Institute"/>
            <person name="Copeland A."/>
            <person name="Lucas S."/>
            <person name="Lapidus A."/>
            <person name="Barry K."/>
            <person name="Detter J.C."/>
            <person name="Glavina del Rio T."/>
            <person name="Hammon N."/>
            <person name="Israni S."/>
            <person name="Dalin E."/>
            <person name="Tice H."/>
            <person name="Pitluck S."/>
            <person name="Martinez M."/>
            <person name="Schmutz J."/>
            <person name="Larimer F."/>
            <person name="Land M."/>
            <person name="Hauser L."/>
            <person name="Kyrpides N."/>
            <person name="Kim E."/>
            <person name="Miller C.D."/>
            <person name="Hughes J.E."/>
            <person name="Anderson A.J."/>
            <person name="Sims R.C."/>
            <person name="Richardson P."/>
        </authorList>
    </citation>
    <scope>NUCLEOTIDE SEQUENCE [LARGE SCALE GENOMIC DNA]</scope>
    <source>
        <strain>MCS</strain>
    </source>
</reference>
<sequence>MAQEQTKRGGGGGEDDDLSGGAGAGQERREKLAEETDDLLDEIDDVLEENAEDFVRAYVQKGGQ</sequence>
<comment type="function">
    <text evidence="1">Protein modifier that is covalently attached to lysine residues of substrate proteins, thereby targeting them for proteasomal degradation. The tagging system is termed pupylation (By similarity).</text>
</comment>
<comment type="pathway">
    <text>Protein degradation; proteasomal Pup-dependent pathway.</text>
</comment>
<comment type="subunit">
    <text evidence="1">Strongly interacts with the proteasome-associated ATPase ARC through a hydrophobic interface; the interacting region of Pup lies in its C-terminal half. There is one Pup binding site per ARC hexamer ring (By similarity).</text>
</comment>
<comment type="domain">
    <text evidence="1">The N-terminal unstructured half of Pup provides a signal required to initiate unfolding and degradation by the proteasome but is not needed for pupylation, while the C-terminal helical half of Pup interacts with ARC to target proteins to the proteasome.</text>
</comment>
<comment type="PTM">
    <text evidence="1">Is modified by deamidation of its C-terminal glutamine to glutamate by the deamidase Dop, a prerequisite to the subsequent pupylation process.</text>
</comment>
<comment type="similarity">
    <text evidence="4">Belongs to the prokaryotic ubiquitin-like protein family.</text>
</comment>
<evidence type="ECO:0000250" key="1"/>
<evidence type="ECO:0000255" key="2"/>
<evidence type="ECO:0000256" key="3">
    <source>
        <dbReference type="SAM" id="MobiDB-lite"/>
    </source>
</evidence>
<evidence type="ECO:0000305" key="4"/>
<proteinExistence type="inferred from homology"/>
<accession>P0CG93</accession>
<organism>
    <name type="scientific">Mycobacterium sp. (strain MCS)</name>
    <dbReference type="NCBI Taxonomy" id="164756"/>
    <lineage>
        <taxon>Bacteria</taxon>
        <taxon>Bacillati</taxon>
        <taxon>Actinomycetota</taxon>
        <taxon>Actinomycetes</taxon>
        <taxon>Mycobacteriales</taxon>
        <taxon>Mycobacteriaceae</taxon>
        <taxon>Mycobacterium</taxon>
    </lineage>
</organism>
<keyword id="KW-0175">Coiled coil</keyword>
<keyword id="KW-1017">Isopeptide bond</keyword>
<keyword id="KW-0833">Ubl conjugation pathway</keyword>
<dbReference type="EMBL" id="CP000384">
    <property type="status" value="NOT_ANNOTATED_CDS"/>
    <property type="molecule type" value="Genomic_DNA"/>
</dbReference>
<dbReference type="SMR" id="P0CG93"/>
<dbReference type="UniPathway" id="UPA00997"/>
<dbReference type="GO" id="GO:0070628">
    <property type="term" value="F:proteasome binding"/>
    <property type="evidence" value="ECO:0007669"/>
    <property type="project" value="UniProtKB-UniRule"/>
</dbReference>
<dbReference type="GO" id="GO:0031386">
    <property type="term" value="F:protein tag activity"/>
    <property type="evidence" value="ECO:0007669"/>
    <property type="project" value="UniProtKB-UniRule"/>
</dbReference>
<dbReference type="GO" id="GO:0019941">
    <property type="term" value="P:modification-dependent protein catabolic process"/>
    <property type="evidence" value="ECO:0007669"/>
    <property type="project" value="UniProtKB-UniRule"/>
</dbReference>
<dbReference type="GO" id="GO:0010498">
    <property type="term" value="P:proteasomal protein catabolic process"/>
    <property type="evidence" value="ECO:0007669"/>
    <property type="project" value="UniProtKB-UniRule"/>
</dbReference>
<dbReference type="GO" id="GO:0070490">
    <property type="term" value="P:protein pupylation"/>
    <property type="evidence" value="ECO:0007669"/>
    <property type="project" value="UniProtKB-UniRule"/>
</dbReference>
<dbReference type="HAMAP" id="MF_02106">
    <property type="entry name" value="Pup"/>
    <property type="match status" value="1"/>
</dbReference>
<dbReference type="InterPro" id="IPR008515">
    <property type="entry name" value="Ubiquitin-like_Pup"/>
</dbReference>
<dbReference type="NCBIfam" id="TIGR03687">
    <property type="entry name" value="pupylate_cterm"/>
    <property type="match status" value="1"/>
</dbReference>
<dbReference type="Pfam" id="PF05639">
    <property type="entry name" value="Pup"/>
    <property type="match status" value="1"/>
</dbReference>
<protein>
    <recommendedName>
        <fullName>Prokaryotic ubiquitin-like protein Pup</fullName>
    </recommendedName>
    <alternativeName>
        <fullName>Bacterial ubiquitin-like modifier</fullName>
    </alternativeName>
</protein>
<feature type="chain" id="PRO_0000395999" description="Prokaryotic ubiquitin-like protein Pup">
    <location>
        <begin position="1"/>
        <end position="64"/>
    </location>
</feature>
<feature type="region of interest" description="Disordered" evidence="3">
    <location>
        <begin position="1"/>
        <end position="37"/>
    </location>
</feature>
<feature type="region of interest" description="ARC ATPase binding" evidence="1">
    <location>
        <begin position="21"/>
        <end position="58"/>
    </location>
</feature>
<feature type="coiled-coil region" evidence="2">
    <location>
        <begin position="24"/>
        <end position="52"/>
    </location>
</feature>
<feature type="modified residue" description="Deamidated glutamine" evidence="1">
    <location>
        <position position="64"/>
    </location>
</feature>
<feature type="cross-link" description="Isoglutamyl lysine isopeptide (Gln-Lys) (interchain with K-? in acceptor proteins)" evidence="1">
    <location>
        <position position="64"/>
    </location>
</feature>
<name>PUP_MYCSS</name>